<dbReference type="EMBL" id="M36602">
    <property type="protein sequence ID" value="AAA84632.1"/>
    <property type="molecule type" value="Genomic_DNA"/>
</dbReference>
<dbReference type="EMBL" id="AJ400848">
    <property type="protein sequence ID" value="CAB88742.1"/>
    <property type="molecule type" value="Genomic_DNA"/>
</dbReference>
<dbReference type="PIR" id="S00430">
    <property type="entry name" value="S00430"/>
</dbReference>
<dbReference type="RefSeq" id="NP_054949.1">
    <property type="nucleotide sequence ID" value="NC_002202.1"/>
</dbReference>
<dbReference type="PDB" id="6RQF">
    <property type="method" value="EM"/>
    <property type="resolution" value="3.58 A"/>
    <property type="chains" value="C/K=36-320"/>
</dbReference>
<dbReference type="PDB" id="7QRM">
    <property type="method" value="EM"/>
    <property type="resolution" value="2.70 A"/>
    <property type="chains" value="C/K=1-320"/>
</dbReference>
<dbReference type="PDB" id="7ZYV">
    <property type="method" value="EM"/>
    <property type="resolution" value="2.13 A"/>
    <property type="chains" value="C/K=1-320"/>
</dbReference>
<dbReference type="PDB" id="9ES7">
    <property type="method" value="EM"/>
    <property type="resolution" value="1.94 A"/>
    <property type="chains" value="C/K=1-320"/>
</dbReference>
<dbReference type="PDB" id="9ES8">
    <property type="method" value="EM"/>
    <property type="resolution" value="2.24 A"/>
    <property type="chains" value="C/K=1-320"/>
</dbReference>
<dbReference type="PDB" id="9ES9">
    <property type="method" value="EM"/>
    <property type="resolution" value="2.33 A"/>
    <property type="chains" value="C/K=1-320"/>
</dbReference>
<dbReference type="PDBsum" id="6RQF"/>
<dbReference type="PDBsum" id="7QRM"/>
<dbReference type="PDBsum" id="7ZYV"/>
<dbReference type="PDBsum" id="9ES7"/>
<dbReference type="PDBsum" id="9ES8"/>
<dbReference type="PDBsum" id="9ES9"/>
<dbReference type="EMDB" id="EMD-19938"/>
<dbReference type="EMDB" id="EMD-19939"/>
<dbReference type="EMDB" id="EMD-19940"/>
<dbReference type="SMR" id="P16013"/>
<dbReference type="FunCoup" id="P16013">
    <property type="interactions" value="304"/>
</dbReference>
<dbReference type="IntAct" id="P16013">
    <property type="interactions" value="1"/>
</dbReference>
<dbReference type="STRING" id="3562.P16013"/>
<dbReference type="GeneID" id="2715597"/>
<dbReference type="KEGG" id="soe:2715597"/>
<dbReference type="InParanoid" id="P16013"/>
<dbReference type="OrthoDB" id="415867at2759"/>
<dbReference type="Proteomes" id="UP001155700">
    <property type="component" value="Chloroplast Pltd"/>
</dbReference>
<dbReference type="GO" id="GO:0009535">
    <property type="term" value="C:chloroplast thylakoid membrane"/>
    <property type="evidence" value="ECO:0007669"/>
    <property type="project" value="UniProtKB-SubCell"/>
</dbReference>
<dbReference type="GO" id="GO:0009055">
    <property type="term" value="F:electron transfer activity"/>
    <property type="evidence" value="ECO:0007669"/>
    <property type="project" value="UniProtKB-UniRule"/>
</dbReference>
<dbReference type="GO" id="GO:0020037">
    <property type="term" value="F:heme binding"/>
    <property type="evidence" value="ECO:0007669"/>
    <property type="project" value="InterPro"/>
</dbReference>
<dbReference type="GO" id="GO:0005506">
    <property type="term" value="F:iron ion binding"/>
    <property type="evidence" value="ECO:0007669"/>
    <property type="project" value="InterPro"/>
</dbReference>
<dbReference type="GO" id="GO:0015979">
    <property type="term" value="P:photosynthesis"/>
    <property type="evidence" value="ECO:0007669"/>
    <property type="project" value="UniProtKB-UniRule"/>
</dbReference>
<dbReference type="FunFam" id="1.20.5.700:FF:000001">
    <property type="entry name" value="Cytochrome f"/>
    <property type="match status" value="1"/>
</dbReference>
<dbReference type="FunFam" id="2.40.50.100:FF:000007">
    <property type="entry name" value="Cytochrome f"/>
    <property type="match status" value="1"/>
</dbReference>
<dbReference type="FunFam" id="2.60.40.830:FF:000001">
    <property type="entry name" value="Cytochrome f"/>
    <property type="match status" value="1"/>
</dbReference>
<dbReference type="Gene3D" id="2.40.50.100">
    <property type="match status" value="1"/>
</dbReference>
<dbReference type="Gene3D" id="2.60.40.830">
    <property type="entry name" value="Cytochrome f large domain"/>
    <property type="match status" value="1"/>
</dbReference>
<dbReference type="Gene3D" id="1.20.5.700">
    <property type="entry name" value="Single helix bin"/>
    <property type="match status" value="1"/>
</dbReference>
<dbReference type="HAMAP" id="MF_00610">
    <property type="entry name" value="Cytb6_f_cytF"/>
    <property type="match status" value="1"/>
</dbReference>
<dbReference type="InterPro" id="IPR024058">
    <property type="entry name" value="Cyt-f_TM"/>
</dbReference>
<dbReference type="InterPro" id="IPR002325">
    <property type="entry name" value="Cyt_f"/>
</dbReference>
<dbReference type="InterPro" id="IPR024094">
    <property type="entry name" value="Cyt_f_lg_dom"/>
</dbReference>
<dbReference type="InterPro" id="IPR036826">
    <property type="entry name" value="Cyt_f_lg_dom_sf"/>
</dbReference>
<dbReference type="InterPro" id="IPR011054">
    <property type="entry name" value="Rudment_hybrid_motif"/>
</dbReference>
<dbReference type="PANTHER" id="PTHR33288">
    <property type="match status" value="1"/>
</dbReference>
<dbReference type="PANTHER" id="PTHR33288:SF10">
    <property type="entry name" value="CYTOCHROME F"/>
    <property type="match status" value="1"/>
</dbReference>
<dbReference type="Pfam" id="PF01333">
    <property type="entry name" value="Apocytochr_F_C"/>
    <property type="match status" value="1"/>
</dbReference>
<dbReference type="Pfam" id="PF16639">
    <property type="entry name" value="Apocytochr_F_N"/>
    <property type="match status" value="1"/>
</dbReference>
<dbReference type="PRINTS" id="PR00610">
    <property type="entry name" value="CYTOCHROMEF"/>
</dbReference>
<dbReference type="SUPFAM" id="SSF103431">
    <property type="entry name" value="Cytochrome f subunit of the cytochrome b6f complex, transmembrane anchor"/>
    <property type="match status" value="1"/>
</dbReference>
<dbReference type="SUPFAM" id="SSF49441">
    <property type="entry name" value="Cytochrome f, large domain"/>
    <property type="match status" value="1"/>
</dbReference>
<dbReference type="SUPFAM" id="SSF51246">
    <property type="entry name" value="Rudiment single hybrid motif"/>
    <property type="match status" value="1"/>
</dbReference>
<dbReference type="PROSITE" id="PS51010">
    <property type="entry name" value="CYTF"/>
    <property type="match status" value="1"/>
</dbReference>
<accession>P16013</accession>
<accession>Q9M3L3</accession>
<sequence length="320" mass="35319">MQTINTFSWIKEQITRSISISLILYIITRSSIANAYPIFAQQGYENPREATGRIVCANCHLANKPVDIEVPQAVLPDTVFEAVVRIPYDMQLKQVLANGKKGGLNVGAVLILPEGFELAPPDRISPEMKEKMGNLSFQSYRPNKQNILVIGPVPGQKYSEITFPILAPDPATKKDVHFLKYPIYVGGNRGRGQIYPDGSKSNNTVYNSTATGIVKKIVRKEKGGYEINIADASDGREVVDIIPRGPELLVSEGESIKLDQPLTSNPNVGGFGQGDAEVVLQDPLRIQGLLFFFASVILAQIFLVLKKKQFEKVQLSEMNF</sequence>
<gene>
    <name type="primary">petA</name>
</gene>
<organism>
    <name type="scientific">Spinacia oleracea</name>
    <name type="common">Spinach</name>
    <dbReference type="NCBI Taxonomy" id="3562"/>
    <lineage>
        <taxon>Eukaryota</taxon>
        <taxon>Viridiplantae</taxon>
        <taxon>Streptophyta</taxon>
        <taxon>Embryophyta</taxon>
        <taxon>Tracheophyta</taxon>
        <taxon>Spermatophyta</taxon>
        <taxon>Magnoliopsida</taxon>
        <taxon>eudicotyledons</taxon>
        <taxon>Gunneridae</taxon>
        <taxon>Pentapetalae</taxon>
        <taxon>Caryophyllales</taxon>
        <taxon>Chenopodiaceae</taxon>
        <taxon>Chenopodioideae</taxon>
        <taxon>Anserineae</taxon>
        <taxon>Spinacia</taxon>
    </lineage>
</organism>
<proteinExistence type="evidence at protein level"/>
<reference key="1">
    <citation type="journal article" date="1984" name="Curr. Genet.">
        <title>Nucleotide sequence of the gene for pre-apocytochrome f in the spinach plastid chromosome.</title>
        <authorList>
            <person name="Alt J."/>
            <person name="Herrmann R.G."/>
        </authorList>
    </citation>
    <scope>NUCLEOTIDE SEQUENCE [GENOMIC DNA]</scope>
</reference>
<reference key="2">
    <citation type="journal article" date="2001" name="Plant Mol. Biol.">
        <title>The plastid chromosome of spinach (Spinacia oleracea): complete nucleotide sequence and gene organization.</title>
        <authorList>
            <person name="Schmitz-Linneweber C."/>
            <person name="Maier R.M."/>
            <person name="Alcaraz J.-P."/>
            <person name="Cottet A."/>
            <person name="Herrmann R.G."/>
            <person name="Mache R."/>
        </authorList>
    </citation>
    <scope>NUCLEOTIDE SEQUENCE [LARGE SCALE GENOMIC DNA]</scope>
    <source>
        <strain>cv. Geant d'hiver</strain>
        <strain>cv. Monatol</strain>
    </source>
</reference>
<geneLocation type="chloroplast"/>
<feature type="signal peptide" evidence="1">
    <location>
        <begin position="1"/>
        <end position="35"/>
    </location>
</feature>
<feature type="chain" id="PRO_0000023837" description="Cytochrome f">
    <location>
        <begin position="36"/>
        <end position="320"/>
    </location>
</feature>
<feature type="transmembrane region" description="Helical" evidence="2">
    <location>
        <begin position="286"/>
        <end position="305"/>
    </location>
</feature>
<feature type="binding site" description="axial binding residue" evidence="1">
    <location>
        <position position="36"/>
    </location>
    <ligand>
        <name>heme</name>
        <dbReference type="ChEBI" id="CHEBI:30413"/>
    </ligand>
    <ligandPart>
        <name>Fe</name>
        <dbReference type="ChEBI" id="CHEBI:18248"/>
    </ligandPart>
</feature>
<feature type="binding site" description="covalent" evidence="1">
    <location>
        <position position="56"/>
    </location>
    <ligand>
        <name>heme</name>
        <dbReference type="ChEBI" id="CHEBI:30413"/>
    </ligand>
</feature>
<feature type="binding site" description="covalent" evidence="1">
    <location>
        <position position="59"/>
    </location>
    <ligand>
        <name>heme</name>
        <dbReference type="ChEBI" id="CHEBI:30413"/>
    </ligand>
</feature>
<feature type="binding site" description="axial binding residue" evidence="1">
    <location>
        <position position="60"/>
    </location>
    <ligand>
        <name>heme</name>
        <dbReference type="ChEBI" id="CHEBI:30413"/>
    </ligand>
    <ligandPart>
        <name>Fe</name>
        <dbReference type="ChEBI" id="CHEBI:18248"/>
    </ligandPart>
</feature>
<feature type="sequence conflict" description="In Ref. 1; AAA84632." evidence="3" ref="1">
    <original>G</original>
    <variation>R</variation>
    <location>
        <position position="235"/>
    </location>
</feature>
<feature type="helix" evidence="4">
    <location>
        <begin position="37"/>
        <end position="43"/>
    </location>
</feature>
<feature type="helix" evidence="4">
    <location>
        <begin position="55"/>
        <end position="58"/>
    </location>
</feature>
<feature type="strand" evidence="4">
    <location>
        <begin position="67"/>
        <end position="69"/>
    </location>
</feature>
<feature type="strand" evidence="4">
    <location>
        <begin position="72"/>
        <end position="74"/>
    </location>
</feature>
<feature type="strand" evidence="4">
    <location>
        <begin position="79"/>
        <end position="85"/>
    </location>
</feature>
<feature type="strand" evidence="4">
    <location>
        <begin position="105"/>
        <end position="111"/>
    </location>
</feature>
<feature type="helix" evidence="4">
    <location>
        <begin position="121"/>
        <end position="123"/>
    </location>
</feature>
<feature type="helix" evidence="4">
    <location>
        <begin position="126"/>
        <end position="132"/>
    </location>
</feature>
<feature type="strand" evidence="4">
    <location>
        <begin position="138"/>
        <end position="141"/>
    </location>
</feature>
<feature type="strand" evidence="4">
    <location>
        <begin position="147"/>
        <end position="154"/>
    </location>
</feature>
<feature type="turn" evidence="4">
    <location>
        <begin position="155"/>
        <end position="157"/>
    </location>
</feature>
<feature type="strand" evidence="4">
    <location>
        <begin position="159"/>
        <end position="166"/>
    </location>
</feature>
<feature type="turn" evidence="4">
    <location>
        <begin position="170"/>
        <end position="172"/>
    </location>
</feature>
<feature type="strand" evidence="4">
    <location>
        <begin position="180"/>
        <end position="190"/>
    </location>
</feature>
<feature type="strand" evidence="4">
    <location>
        <begin position="202"/>
        <end position="204"/>
    </location>
</feature>
<feature type="strand" evidence="4">
    <location>
        <begin position="212"/>
        <end position="219"/>
    </location>
</feature>
<feature type="strand" evidence="5">
    <location>
        <begin position="221"/>
        <end position="223"/>
    </location>
</feature>
<feature type="strand" evidence="4">
    <location>
        <begin position="225"/>
        <end position="230"/>
    </location>
</feature>
<feature type="strand" evidence="4">
    <location>
        <begin position="238"/>
        <end position="242"/>
    </location>
</feature>
<feature type="strand" evidence="5">
    <location>
        <begin position="244"/>
        <end position="246"/>
    </location>
</feature>
<feature type="strand" evidence="5">
    <location>
        <begin position="252"/>
        <end position="256"/>
    </location>
</feature>
<feature type="strand" evidence="4">
    <location>
        <begin position="270"/>
        <end position="280"/>
    </location>
</feature>
<feature type="helix" evidence="4">
    <location>
        <begin position="283"/>
        <end position="317"/>
    </location>
</feature>
<protein>
    <recommendedName>
        <fullName>Cytochrome f</fullName>
    </recommendedName>
</protein>
<evidence type="ECO:0000250" key="1"/>
<evidence type="ECO:0000255" key="2"/>
<evidence type="ECO:0000305" key="3"/>
<evidence type="ECO:0007829" key="4">
    <source>
        <dbReference type="PDB" id="9ES7"/>
    </source>
</evidence>
<evidence type="ECO:0007829" key="5">
    <source>
        <dbReference type="PDB" id="9ES9"/>
    </source>
</evidence>
<keyword id="KW-0002">3D-structure</keyword>
<keyword id="KW-0150">Chloroplast</keyword>
<keyword id="KW-0249">Electron transport</keyword>
<keyword id="KW-0349">Heme</keyword>
<keyword id="KW-0408">Iron</keyword>
<keyword id="KW-0472">Membrane</keyword>
<keyword id="KW-0479">Metal-binding</keyword>
<keyword id="KW-0602">Photosynthesis</keyword>
<keyword id="KW-0934">Plastid</keyword>
<keyword id="KW-1185">Reference proteome</keyword>
<keyword id="KW-0732">Signal</keyword>
<keyword id="KW-0793">Thylakoid</keyword>
<keyword id="KW-0812">Transmembrane</keyword>
<keyword id="KW-1133">Transmembrane helix</keyword>
<keyword id="KW-0813">Transport</keyword>
<name>CYF_SPIOL</name>
<comment type="function">
    <text evidence="1">Component of the cytochrome b6-f complex, which mediates electron transfer between photosystem II (PSII) and photosystem I (PSI), cyclic electron flow around PSI, and state transitions.</text>
</comment>
<comment type="cofactor">
    <cofactor evidence="1">
        <name>heme</name>
        <dbReference type="ChEBI" id="CHEBI:30413"/>
    </cofactor>
    <text evidence="1">Binds 1 heme group covalently.</text>
</comment>
<comment type="subunit">
    <text evidence="1">The 4 large subunits of the cytochrome b6-f complex are cytochrome b6, subunit IV (17 kDa polypeptide, petD), cytochrome f and the Rieske protein, while the 4 small subunits are PetG, PetL, PetM and PetN. The complex functions as a dimer (By similarity).</text>
</comment>
<comment type="subcellular location">
    <subcellularLocation>
        <location evidence="1">Plastid</location>
        <location evidence="1">Chloroplast thylakoid membrane</location>
        <topology evidence="1">Single-pass membrane protein</topology>
    </subcellularLocation>
</comment>
<comment type="similarity">
    <text evidence="3">Belongs to the cytochrome f family.</text>
</comment>